<keyword id="KW-0002">3D-structure</keyword>
<keyword id="KW-0007">Acetylation</keyword>
<keyword id="KW-0010">Activator</keyword>
<keyword id="KW-0221">Differentiation</keyword>
<keyword id="KW-0238">DNA-binding</keyword>
<keyword id="KW-1017">Isopeptide bond</keyword>
<keyword id="KW-0539">Nucleus</keyword>
<keyword id="KW-0597">Phosphoprotein</keyword>
<keyword id="KW-1185">Reference proteome</keyword>
<keyword id="KW-0804">Transcription</keyword>
<keyword id="KW-0805">Transcription regulation</keyword>
<keyword id="KW-0832">Ubl conjugation</keyword>
<protein>
    <recommendedName>
        <fullName evidence="35">Transcription factor SOX-9</fullName>
        <shortName evidence="33">mSox9</shortName>
    </recommendedName>
</protein>
<name>SOX9_MOUSE</name>
<reference key="1">
    <citation type="submission" date="2001-09" db="EMBL/GenBank/DDBJ databases">
        <title>The gene expression of Sox9 in mouse genital ridges.</title>
        <authorList>
            <person name="Lee H.-H."/>
        </authorList>
    </citation>
    <scope>NUCLEOTIDE SEQUENCE [MRNA]</scope>
    <source>
        <strain>129</strain>
    </source>
</reference>
<reference key="2">
    <citation type="journal article" date="2005" name="Science">
        <title>The transcriptional landscape of the mammalian genome.</title>
        <authorList>
            <person name="Carninci P."/>
            <person name="Kasukawa T."/>
            <person name="Katayama S."/>
            <person name="Gough J."/>
            <person name="Frith M.C."/>
            <person name="Maeda N."/>
            <person name="Oyama R."/>
            <person name="Ravasi T."/>
            <person name="Lenhard B."/>
            <person name="Wells C."/>
            <person name="Kodzius R."/>
            <person name="Shimokawa K."/>
            <person name="Bajic V.B."/>
            <person name="Brenner S.E."/>
            <person name="Batalov S."/>
            <person name="Forrest A.R."/>
            <person name="Zavolan M."/>
            <person name="Davis M.J."/>
            <person name="Wilming L.G."/>
            <person name="Aidinis V."/>
            <person name="Allen J.E."/>
            <person name="Ambesi-Impiombato A."/>
            <person name="Apweiler R."/>
            <person name="Aturaliya R.N."/>
            <person name="Bailey T.L."/>
            <person name="Bansal M."/>
            <person name="Baxter L."/>
            <person name="Beisel K.W."/>
            <person name="Bersano T."/>
            <person name="Bono H."/>
            <person name="Chalk A.M."/>
            <person name="Chiu K.P."/>
            <person name="Choudhary V."/>
            <person name="Christoffels A."/>
            <person name="Clutterbuck D.R."/>
            <person name="Crowe M.L."/>
            <person name="Dalla E."/>
            <person name="Dalrymple B.P."/>
            <person name="de Bono B."/>
            <person name="Della Gatta G."/>
            <person name="di Bernardo D."/>
            <person name="Down T."/>
            <person name="Engstrom P."/>
            <person name="Fagiolini M."/>
            <person name="Faulkner G."/>
            <person name="Fletcher C.F."/>
            <person name="Fukushima T."/>
            <person name="Furuno M."/>
            <person name="Futaki S."/>
            <person name="Gariboldi M."/>
            <person name="Georgii-Hemming P."/>
            <person name="Gingeras T.R."/>
            <person name="Gojobori T."/>
            <person name="Green R.E."/>
            <person name="Gustincich S."/>
            <person name="Harbers M."/>
            <person name="Hayashi Y."/>
            <person name="Hensch T.K."/>
            <person name="Hirokawa N."/>
            <person name="Hill D."/>
            <person name="Huminiecki L."/>
            <person name="Iacono M."/>
            <person name="Ikeo K."/>
            <person name="Iwama A."/>
            <person name="Ishikawa T."/>
            <person name="Jakt M."/>
            <person name="Kanapin A."/>
            <person name="Katoh M."/>
            <person name="Kawasawa Y."/>
            <person name="Kelso J."/>
            <person name="Kitamura H."/>
            <person name="Kitano H."/>
            <person name="Kollias G."/>
            <person name="Krishnan S.P."/>
            <person name="Kruger A."/>
            <person name="Kummerfeld S.K."/>
            <person name="Kurochkin I.V."/>
            <person name="Lareau L.F."/>
            <person name="Lazarevic D."/>
            <person name="Lipovich L."/>
            <person name="Liu J."/>
            <person name="Liuni S."/>
            <person name="McWilliam S."/>
            <person name="Madan Babu M."/>
            <person name="Madera M."/>
            <person name="Marchionni L."/>
            <person name="Matsuda H."/>
            <person name="Matsuzawa S."/>
            <person name="Miki H."/>
            <person name="Mignone F."/>
            <person name="Miyake S."/>
            <person name="Morris K."/>
            <person name="Mottagui-Tabar S."/>
            <person name="Mulder N."/>
            <person name="Nakano N."/>
            <person name="Nakauchi H."/>
            <person name="Ng P."/>
            <person name="Nilsson R."/>
            <person name="Nishiguchi S."/>
            <person name="Nishikawa S."/>
            <person name="Nori F."/>
            <person name="Ohara O."/>
            <person name="Okazaki Y."/>
            <person name="Orlando V."/>
            <person name="Pang K.C."/>
            <person name="Pavan W.J."/>
            <person name="Pavesi G."/>
            <person name="Pesole G."/>
            <person name="Petrovsky N."/>
            <person name="Piazza S."/>
            <person name="Reed J."/>
            <person name="Reid J.F."/>
            <person name="Ring B.Z."/>
            <person name="Ringwald M."/>
            <person name="Rost B."/>
            <person name="Ruan Y."/>
            <person name="Salzberg S.L."/>
            <person name="Sandelin A."/>
            <person name="Schneider C."/>
            <person name="Schoenbach C."/>
            <person name="Sekiguchi K."/>
            <person name="Semple C.A."/>
            <person name="Seno S."/>
            <person name="Sessa L."/>
            <person name="Sheng Y."/>
            <person name="Shibata Y."/>
            <person name="Shimada H."/>
            <person name="Shimada K."/>
            <person name="Silva D."/>
            <person name="Sinclair B."/>
            <person name="Sperling S."/>
            <person name="Stupka E."/>
            <person name="Sugiura K."/>
            <person name="Sultana R."/>
            <person name="Takenaka Y."/>
            <person name="Taki K."/>
            <person name="Tammoja K."/>
            <person name="Tan S.L."/>
            <person name="Tang S."/>
            <person name="Taylor M.S."/>
            <person name="Tegner J."/>
            <person name="Teichmann S.A."/>
            <person name="Ueda H.R."/>
            <person name="van Nimwegen E."/>
            <person name="Verardo R."/>
            <person name="Wei C.L."/>
            <person name="Yagi K."/>
            <person name="Yamanishi H."/>
            <person name="Zabarovsky E."/>
            <person name="Zhu S."/>
            <person name="Zimmer A."/>
            <person name="Hide W."/>
            <person name="Bult C."/>
            <person name="Grimmond S.M."/>
            <person name="Teasdale R.D."/>
            <person name="Liu E.T."/>
            <person name="Brusic V."/>
            <person name="Quackenbush J."/>
            <person name="Wahlestedt C."/>
            <person name="Mattick J.S."/>
            <person name="Hume D.A."/>
            <person name="Kai C."/>
            <person name="Sasaki D."/>
            <person name="Tomaru Y."/>
            <person name="Fukuda S."/>
            <person name="Kanamori-Katayama M."/>
            <person name="Suzuki M."/>
            <person name="Aoki J."/>
            <person name="Arakawa T."/>
            <person name="Iida J."/>
            <person name="Imamura K."/>
            <person name="Itoh M."/>
            <person name="Kato T."/>
            <person name="Kawaji H."/>
            <person name="Kawagashira N."/>
            <person name="Kawashima T."/>
            <person name="Kojima M."/>
            <person name="Kondo S."/>
            <person name="Konno H."/>
            <person name="Nakano K."/>
            <person name="Ninomiya N."/>
            <person name="Nishio T."/>
            <person name="Okada M."/>
            <person name="Plessy C."/>
            <person name="Shibata K."/>
            <person name="Shiraki T."/>
            <person name="Suzuki S."/>
            <person name="Tagami M."/>
            <person name="Waki K."/>
            <person name="Watahiki A."/>
            <person name="Okamura-Oho Y."/>
            <person name="Suzuki H."/>
            <person name="Kawai J."/>
            <person name="Hayashizaki Y."/>
        </authorList>
    </citation>
    <scope>NUCLEOTIDE SEQUENCE [LARGE SCALE MRNA]</scope>
    <source>
        <strain>C57BL/6J</strain>
        <tissue>Hippocampus</tissue>
        <tissue>Testis</tissue>
    </source>
</reference>
<reference key="3">
    <citation type="journal article" date="2004" name="Genome Res.">
        <title>The status, quality, and expansion of the NIH full-length cDNA project: the Mammalian Gene Collection (MGC).</title>
        <authorList>
            <consortium name="The MGC Project Team"/>
        </authorList>
    </citation>
    <scope>NUCLEOTIDE SEQUENCE [LARGE SCALE MRNA]</scope>
    <source>
        <strain>FVB/N</strain>
        <tissue>Salivary gland</tissue>
    </source>
</reference>
<reference key="4">
    <citation type="journal article" date="1993" name="Nucleic Acids Res.">
        <title>Seven new members of the Sox gene family expressed during mouse development.</title>
        <authorList>
            <person name="Wright E.M."/>
            <person name="Snopek B."/>
            <person name="Koopman P."/>
        </authorList>
    </citation>
    <scope>NUCLEOTIDE SEQUENCE [MRNA] OF 113-168</scope>
</reference>
<reference key="5">
    <citation type="journal article" date="1995" name="Nat. Genet.">
        <title>The Sry-related gene Sox9 is expressed during chondrogenesis in mouse embryos.</title>
        <authorList>
            <person name="Wright E."/>
            <person name="Hargrave M.R."/>
            <person name="Christiansen J."/>
            <person name="Cooper L."/>
            <person name="Kun J."/>
            <person name="Evans T."/>
            <person name="Gangadharan U."/>
            <person name="Greenfield A."/>
            <person name="Koopman P."/>
        </authorList>
    </citation>
    <scope>DEVELOPMENTAL STAGE</scope>
</reference>
<reference key="6">
    <citation type="journal article" date="1997" name="Dev. Biol.">
        <title>SOX9 binds DNA, activates transcription, and coexpresses with type II collagen during chondrogenesis in the mouse.</title>
        <authorList>
            <person name="Ng L.J."/>
            <person name="Wheatley S."/>
            <person name="Muscat G.E."/>
            <person name="Conway-Campbell J."/>
            <person name="Bowles J."/>
            <person name="Wright E."/>
            <person name="Bell D.M."/>
            <person name="Tam P.P."/>
            <person name="Cheah K.S."/>
            <person name="Koopman P."/>
        </authorList>
    </citation>
    <scope>FUNCTION</scope>
    <scope>DNA-BINDING</scope>
    <scope>TISSUE SPECIFICITY</scope>
    <scope>DEVELOPMENTAL STAGE</scope>
</reference>
<reference key="7">
    <citation type="journal article" date="1999" name="Nat. Genet.">
        <title>Sox9 is required for cartilage formation.</title>
        <authorList>
            <person name="Bi W."/>
            <person name="Deng J.M."/>
            <person name="Zhang Z."/>
            <person name="Behringer R.R."/>
            <person name="de Crombrugghe B."/>
        </authorList>
    </citation>
    <scope>FUNCTION</scope>
</reference>
<reference key="8">
    <citation type="journal article" date="2000" name="Mol. Cell. Biol.">
        <title>Phosphorylation of SOX9 by cyclic AMP-dependent protein kinase A enhances SOX9's ability to transactivate a Col2a1 chondrocyte-specific enhancer.</title>
        <authorList>
            <person name="Huang W."/>
            <person name="Zhou X."/>
            <person name="Lefebvre V."/>
            <person name="de Crombrugghe B."/>
        </authorList>
    </citation>
    <scope>FUNCTION</scope>
    <scope>SUBCELLULAR LOCATION</scope>
    <scope>PHOSPHORYLATION AT SER-64 AND SER-211</scope>
    <scope>MUTAGENESIS OF SER-64 AND SER-211</scope>
</reference>
<reference key="9">
    <citation type="journal article" date="2001" name="Proc. Natl. Acad. Sci. U.S.A.">
        <title>The chondrogenic transcription factor Sox9 is a target of signaling by the parathyroid hormone-related peptide in the growth plate of endochondral bones.</title>
        <authorList>
            <person name="Huang W."/>
            <person name="Chung U.I."/>
            <person name="Kronenberg H.M."/>
            <person name="de Crombrugghe B."/>
        </authorList>
    </citation>
    <scope>PHOSPHORYLATION AT SER-64 AND SER-211</scope>
    <scope>MUTAGENESIS OF SER-64 AND SER-211</scope>
</reference>
<reference key="10">
    <citation type="journal article" date="2001" name="Proc. Natl. Acad. Sci. U.S.A.">
        <title>Haploinsufficiency of Sox9 results in defective cartilage primordia and premature skeletal mineralization.</title>
        <authorList>
            <person name="Bi W."/>
            <person name="Huang W."/>
            <person name="Whitworth D.J."/>
            <person name="Deng J.M."/>
            <person name="Zhang Z."/>
            <person name="Behringer R.R."/>
            <person name="de Crombrugghe B."/>
        </authorList>
    </citation>
    <scope>FUNCTION</scope>
    <scope>DISRUPTION PHENOTYPE</scope>
</reference>
<reference key="11">
    <citation type="journal article" date="2002" name="Genesis">
        <title>Conditional inactivation of Sox9: a mouse model for campomelic dysplasia.</title>
        <authorList>
            <person name="Kist R."/>
            <person name="Schrewe H."/>
            <person name="Balling R."/>
            <person name="Scherer G."/>
        </authorList>
    </citation>
    <scope>DISRUPTION PHENOTYPE</scope>
</reference>
<reference key="12">
    <citation type="journal article" date="2002" name="Genes Dev.">
        <title>The transcription factor Sox9 has essential roles in successive steps of the chondrocyte differentiation pathway and is required for expression of Sox5 and Sox6.</title>
        <authorList>
            <person name="Akiyama H."/>
            <person name="Chaboissier M.C."/>
            <person name="Martin J.F."/>
            <person name="Schedl A."/>
            <person name="de Crombrugghe B."/>
        </authorList>
    </citation>
    <scope>FUNCTION</scope>
    <scope>DISRUPTION PHENOTYPE</scope>
</reference>
<reference key="13">
    <citation type="journal article" date="2004" name="Arthritis Rheum.">
        <title>The combination of SOX5, SOX6, and SOX9 (the SOX trio) provides signals sufficient for induction of permanent cartilage.</title>
        <authorList>
            <person name="Ikeda T."/>
            <person name="Kamekura S."/>
            <person name="Mabuchi A."/>
            <person name="Kou I."/>
            <person name="Seki S."/>
            <person name="Takato T."/>
            <person name="Nakamura K."/>
            <person name="Kawaguchi H."/>
            <person name="Ikegawa S."/>
            <person name="Chung U.I."/>
        </authorList>
    </citation>
    <scope>FUNCTION</scope>
</reference>
<reference key="14">
    <citation type="journal article" date="2004" name="Genes Dev.">
        <title>Interactions between Sox9 and beta-catenin control chondrocyte differentiation.</title>
        <authorList>
            <person name="Akiyama H."/>
            <person name="Lyons J.P."/>
            <person name="Mori-Akiyama Y."/>
            <person name="Yang X."/>
            <person name="Zhang R."/>
            <person name="Zhang Z."/>
            <person name="Deng J.M."/>
            <person name="Taketo M.M."/>
            <person name="Nakamura T."/>
            <person name="Behringer R.R."/>
            <person name="McCrea P.D."/>
            <person name="de Crombrugghe B."/>
        </authorList>
    </citation>
    <scope>FUNCTION</scope>
    <scope>INTERACTION WITH CTNNB1</scope>
</reference>
<reference key="15">
    <citation type="journal article" date="2005" name="Matrix Biol.">
        <title>The transcription factor Sox9 is degraded by the ubiquitin-proteasome system and stabilized by a mutation in a ubiquitin-target site.</title>
        <authorList>
            <person name="Akiyama H."/>
            <person name="Kamitani T."/>
            <person name="Yang X."/>
            <person name="Kandyil R."/>
            <person name="Bridgewater L.C."/>
            <person name="Fellous M."/>
            <person name="Mori-Akiyama Y."/>
            <person name="de Crombrugghe B."/>
        </authorList>
    </citation>
    <scope>FUNCTION</scope>
    <scope>SUBCELLULAR LOCATION</scope>
    <scope>UBIQUITINATION AT LYS-396</scope>
    <scope>MUTAGENESIS OF LYS-396</scope>
</reference>
<reference key="16">
    <citation type="journal article" date="2005" name="Proc. Natl. Acad. Sci. U.S.A.">
        <title>Osteo-chondroprogenitor cells are derived from Sox9 expressing precursors.</title>
        <authorList>
            <person name="Akiyama H."/>
            <person name="Kim J.E."/>
            <person name="Nakashima K."/>
            <person name="Balmes G."/>
            <person name="Iwai N."/>
            <person name="Deng J.M."/>
            <person name="Zhang Z."/>
            <person name="Martin J.F."/>
            <person name="Behringer R.R."/>
            <person name="Nakamura T."/>
            <person name="de Crombrugghe B."/>
        </authorList>
    </citation>
    <scope>TISSUE SPECIFICITY</scope>
</reference>
<reference key="17">
    <citation type="journal article" date="2007" name="Am. J. Pathol.">
        <title>SRY-related HMG box 9 regulates the expression of Col4a2 through transactivating its enhancer element in mesangial cells.</title>
        <authorList>
            <person name="Sumi E."/>
            <person name="Iehara N."/>
            <person name="Akiyama H."/>
            <person name="Matsubara T."/>
            <person name="Mima A."/>
            <person name="Kanamori H."/>
            <person name="Fukatsu A."/>
            <person name="Salant D.J."/>
            <person name="Kita T."/>
            <person name="Arai H."/>
            <person name="Doi T."/>
        </authorList>
    </citation>
    <scope>FUNCTION</scope>
    <scope>DNA-BINDING</scope>
</reference>
<reference key="18">
    <citation type="journal article" date="2008" name="Int. J. Dev. Biol.">
        <title>Loss of Sox9 function results in defective chondrocyte differentiation of mouse embryonic stem cells in vitro.</title>
        <authorList>
            <person name="Hargus G."/>
            <person name="Kist R."/>
            <person name="Kramer J."/>
            <person name="Gerstel D."/>
            <person name="Neitz A."/>
            <person name="Scherer G."/>
            <person name="Rohwedel J."/>
        </authorList>
    </citation>
    <scope>FUNCTION</scope>
</reference>
<reference key="19">
    <citation type="journal article" date="2010" name="J. Cell Sci.">
        <title>The transcription factor Znf219 regulates chondrocyte differentiation by assembling a transcription factory with Sox9.</title>
        <authorList>
            <person name="Takigawa Y."/>
            <person name="Hata K."/>
            <person name="Muramatsu S."/>
            <person name="Amano K."/>
            <person name="Ono K."/>
            <person name="Wakabayashi M."/>
            <person name="Matsuda A."/>
            <person name="Takada K."/>
            <person name="Nishimura R."/>
            <person name="Yoneda T."/>
        </authorList>
    </citation>
    <scope>FUNCTION</scope>
    <scope>INTERACTION WITH ZNF219</scope>
    <scope>SUBCELLULAR LOCATION</scope>
</reference>
<reference key="20">
    <citation type="journal article" date="2011" name="Development">
        <title>Sox9 sustains chondrocyte survival and hypertrophy in part through Pik3ca-Akt pathways.</title>
        <authorList>
            <person name="Ikegami D."/>
            <person name="Akiyama H."/>
            <person name="Suzuki A."/>
            <person name="Nakamura T."/>
            <person name="Nakano T."/>
            <person name="Yoshikawa H."/>
            <person name="Tsumaki N."/>
        </authorList>
    </citation>
    <scope>FUNCTION</scope>
</reference>
<reference key="21">
    <citation type="journal article" date="2011" name="Hum. Mol. Genet.">
        <title>SOX9 controls epithelial branching by activating RET effector genes during kidney development.</title>
        <authorList>
            <person name="Reginensi A."/>
            <person name="Clarkson M."/>
            <person name="Neirijnck Y."/>
            <person name="Lu B."/>
            <person name="Ohyama T."/>
            <person name="Groves A.K."/>
            <person name="Sock E."/>
            <person name="Wegner M."/>
            <person name="Costantini F."/>
            <person name="Chaboissier M.C."/>
            <person name="Schedl A."/>
        </authorList>
    </citation>
    <scope>FUNCTION</scope>
    <scope>SUBCELLULAR LOCATION</scope>
</reference>
<reference key="22">
    <citation type="journal article" date="2012" name="Dev. Cell">
        <title>Sox9 directs hypertrophic maturation and blocks osteoblast differentiation of growth plate chondrocytes.</title>
        <authorList>
            <person name="Dy P."/>
            <person name="Wang W."/>
            <person name="Bhattaram P."/>
            <person name="Wang Q."/>
            <person name="Wang L."/>
            <person name="Ballock R.T."/>
            <person name="Lefebvre V."/>
        </authorList>
    </citation>
    <scope>FUNCTION</scope>
    <scope>DISRUPTION PHENOTYPE</scope>
</reference>
<reference key="23">
    <citation type="journal article" date="2012" name="EMBO J.">
        <title>Nuclear receptor binding protein 1 regulates intestinal progenitor cell homeostasis and tumour formation.</title>
        <authorList>
            <person name="Wilson C.H."/>
            <person name="Crombie C."/>
            <person name="van der Weyden L."/>
            <person name="Poulogiannis G."/>
            <person name="Rust A.G."/>
            <person name="Pardo M."/>
            <person name="Gracia T."/>
            <person name="Yu L."/>
            <person name="Choudhary J."/>
            <person name="Poulin G.B."/>
            <person name="McIntyre R.E."/>
            <person name="Winton D.J."/>
            <person name="March H.N."/>
            <person name="Arends M.J."/>
            <person name="Fraser A.G."/>
            <person name="Adams D.J."/>
        </authorList>
    </citation>
    <scope>TISSUE SPECIFICITY</scope>
</reference>
<reference key="24">
    <citation type="journal article" date="2013" name="Proc. Natl. Acad. Sci. U.S.A.">
        <title>Sox9 plays multiple roles in the lung epithelium during branching morphogenesis.</title>
        <authorList>
            <person name="Rockich B.E."/>
            <person name="Hrycaj S.M."/>
            <person name="Shih H.P."/>
            <person name="Nagy M.S."/>
            <person name="Ferguson M.A."/>
            <person name="Kopp J.L."/>
            <person name="Sander M."/>
            <person name="Wellik D.M."/>
            <person name="Spence J.R."/>
        </authorList>
    </citation>
    <scope>FUNCTION</scope>
    <scope>DISRUPTION PHENOTYPE</scope>
    <scope>DEVELOPMENTAL STAGE</scope>
</reference>
<reference key="25">
    <citation type="journal article" date="2014" name="PLoS ONE">
        <title>SOX9 regulates multiple genes in chondrocytes, including genes encoding ECM proteins, ECM modification enzymes, receptors, and transporters.</title>
        <authorList>
            <person name="Oh C.D."/>
            <person name="Lu Y."/>
            <person name="Liang S."/>
            <person name="Mori-Akiyama Y."/>
            <person name="Chen D."/>
            <person name="de Crombrugghe B."/>
            <person name="Yasuda H."/>
        </authorList>
    </citation>
    <scope>FUNCTION</scope>
    <scope>DNA-BINDING</scope>
</reference>
<reference key="26">
    <citation type="journal article" date="2015" name="Cell Rep.">
        <title>Distinct transcriptional programs underlie Sox9 regulation of the mammalian chondrocyte.</title>
        <authorList>
            <person name="Ohba S."/>
            <person name="He X."/>
            <person name="Hojo H."/>
            <person name="McMahon A.P."/>
        </authorList>
    </citation>
    <scope>FUNCTION</scope>
    <scope>DNA-BINDING</scope>
    <scope>SUBUNIT</scope>
</reference>
<reference key="27">
    <citation type="journal article" date="2015" name="Nucleic Acids Res.">
        <title>The transcription factors SOX9 and SOX5/SOX6 cooperate genome-wide through super-enhancers to drive chondrogenesis.</title>
        <authorList>
            <person name="Liu C.F."/>
            <person name="Lefebvre V."/>
        </authorList>
    </citation>
    <scope>FUNCTION</scope>
    <scope>DNA-BINDING</scope>
</reference>
<reference key="28">
    <citation type="journal article" date="2016" name="Aging Cell">
        <title>Acetylation reduces SOX9 nuclear entry and ACAN gene transactivation in human chondrocytes.</title>
        <authorList>
            <person name="Bar Oz M."/>
            <person name="Kumar A."/>
            <person name="Elayyan J."/>
            <person name="Reich E."/>
            <person name="Binyamin M."/>
            <person name="Kandel L."/>
            <person name="Liebergall M."/>
            <person name="Steinmeyer J."/>
            <person name="Lefebvre V."/>
            <person name="Dvir-Ginzberg M."/>
        </authorList>
    </citation>
    <scope>ACETYLATION</scope>
    <scope>DEACETYLATION</scope>
    <scope>SUBCELLULAR LOCATION</scope>
    <scope>FUNCTION</scope>
</reference>
<reference key="29">
    <citation type="journal article" date="2017" name="J. Clin. Invest.">
        <title>Loss of DDRGK1 modulates SOX9 ubiquitination in spondyloepimetaphyseal dysplasia.</title>
        <authorList>
            <person name="Egunsola A.T."/>
            <person name="Bae Y."/>
            <person name="Jiang M.M."/>
            <person name="Liu D.S."/>
            <person name="Chen-Evenson Y."/>
            <person name="Bertin T."/>
            <person name="Chen S."/>
            <person name="Lu J.T."/>
            <person name="Nevarez L."/>
            <person name="Magal N."/>
            <person name="Raas-Rothschild A."/>
            <person name="Swindell E.C."/>
            <person name="Cohn D.H."/>
            <person name="Gibbs R.A."/>
            <person name="Campeau P.M."/>
            <person name="Shohat M."/>
            <person name="Lee B.H."/>
        </authorList>
    </citation>
    <scope>FUNCTION</scope>
</reference>
<reference key="30">
    <citation type="journal article" date="2018" name="Bone Res.">
        <title>SHP2 regulates skeletal cell fate by modifying SOX9 expression and transcriptional activity.</title>
        <authorList>
            <person name="Zuo C."/>
            <person name="Wang L."/>
            <person name="Kamalesh R.M."/>
            <person name="Bowen M.E."/>
            <person name="Moore D.C."/>
            <person name="Dooner M.S."/>
            <person name="Reginato A.M."/>
            <person name="Wu Q."/>
            <person name="Schorl C."/>
            <person name="Song Y."/>
            <person name="Warman M.L."/>
            <person name="Neel B.G."/>
            <person name="Ehrlich M.G."/>
            <person name="Yang W."/>
        </authorList>
    </citation>
    <scope>PHOSPHORYLATION</scope>
    <scope>DEPHOSPHORYLATION</scope>
    <scope>SUMOYLATION</scope>
</reference>
<reference key="31">
    <citation type="journal article" date="2018" name="Development">
        <title>SOX9 is dispensable for the initiation of epigenetic remodeling and the activation of marker genes at the onset of chondrogenesis.</title>
        <authorList>
            <person name="Liu C.F."/>
            <person name="Angelozzi M."/>
            <person name="Haseeb A."/>
            <person name="Lefebvre V."/>
        </authorList>
    </citation>
    <scope>FUNCTION</scope>
</reference>
<reference key="32">
    <citation type="journal article" date="2018" name="PLoS Genet.">
        <title>Synergistic co-regulation and competition by a SOX9-GLI-FOXA phasic transcriptional network coordinate chondrocyte differentiation transitions.</title>
        <authorList>
            <person name="Tan Z."/>
            <person name="Niu B."/>
            <person name="Tsang K.Y."/>
            <person name="Melhado I.G."/>
            <person name="Ohba S."/>
            <person name="He X."/>
            <person name="Huang Y."/>
            <person name="Wang C."/>
            <person name="McMahon A.P."/>
            <person name="Jauch R."/>
            <person name="Chan D."/>
            <person name="Zhang M.Q."/>
            <person name="Cheah K.S.E."/>
        </authorList>
    </citation>
    <scope>FUNCTION</scope>
</reference>
<reference key="33">
    <citation type="journal article" date="2019" name="Bone">
        <title>Persistent Sox9 expression in hypertrophic chondrocytes suppresses transdifferentiation into osteoblasts.</title>
        <authorList>
            <person name="Lui J.C."/>
            <person name="Yue S."/>
            <person name="Lee A."/>
            <person name="Kikani B."/>
            <person name="Temnycky A."/>
            <person name="Barnes K.M."/>
            <person name="Baron J."/>
        </authorList>
    </citation>
    <scope>FUNCTION</scope>
</reference>
<reference key="34">
    <citation type="journal article" date="2019" name="Curr. Opin. Cell Biol.">
        <title>SOX9 in cartilage development and disease.</title>
        <authorList>
            <person name="Lefebvre V."/>
            <person name="Angelozzi M."/>
            <person name="Haseeb A."/>
        </authorList>
    </citation>
    <scope>REVIEW</scope>
</reference>
<reference key="35">
    <citation type="journal article" date="2020" name="Nature">
        <title>Lipid availability determines fate of skeletal progenitor cells via SOX9.</title>
        <authorList>
            <person name="van Gastel N."/>
            <person name="Stegen S."/>
            <person name="Eelen G."/>
            <person name="Schoors S."/>
            <person name="Carlier A."/>
            <person name="Daniels V.W."/>
            <person name="Baryawno N."/>
            <person name="Przybylski D."/>
            <person name="Depypere M."/>
            <person name="Stiers P.J."/>
            <person name="Lambrechts D."/>
            <person name="Van Looveren R."/>
            <person name="Torrekens S."/>
            <person name="Sharda A."/>
            <person name="Agostinis P."/>
            <person name="Lambrechts D."/>
            <person name="Maes F."/>
            <person name="Swinnen J.V."/>
            <person name="Geris L."/>
            <person name="Van Oosterwyck H."/>
            <person name="Thienpont B."/>
            <person name="Carmeliet P."/>
            <person name="Scadden D.T."/>
            <person name="Carmeliet G."/>
        </authorList>
    </citation>
    <scope>FUNCTION</scope>
    <scope>INDUCTION</scope>
</reference>
<reference evidence="38" key="36">
    <citation type="journal article" date="2015" name="Acta Crystallogr. F Struct. Biol. Commun.">
        <title>Crystallization and X-ray diffraction analysis of the HMG domain of the chondrogenesis master regulator Sox9 in complex with a ChIP-Seq-identified DNA element.</title>
        <authorList>
            <person name="Vivekanandan S."/>
            <person name="Moovarkumudalvan B."/>
            <person name="Lescar J."/>
            <person name="Kolatkar P.R."/>
        </authorList>
    </citation>
    <scope>X-RAY CRYSTALLOGRAPHY (2.70 ANGSTROMS) OF 103-178</scope>
</reference>
<organism>
    <name type="scientific">Mus musculus</name>
    <name type="common">Mouse</name>
    <dbReference type="NCBI Taxonomy" id="10090"/>
    <lineage>
        <taxon>Eukaryota</taxon>
        <taxon>Metazoa</taxon>
        <taxon>Chordata</taxon>
        <taxon>Craniata</taxon>
        <taxon>Vertebrata</taxon>
        <taxon>Euteleostomi</taxon>
        <taxon>Mammalia</taxon>
        <taxon>Eutheria</taxon>
        <taxon>Euarchontoglires</taxon>
        <taxon>Glires</taxon>
        <taxon>Rodentia</taxon>
        <taxon>Myomorpha</taxon>
        <taxon>Muroidea</taxon>
        <taxon>Muridae</taxon>
        <taxon>Murinae</taxon>
        <taxon>Mus</taxon>
        <taxon>Mus</taxon>
    </lineage>
</organism>
<gene>
    <name evidence="34 37" type="primary">Sox9</name>
    <name type="synonym">Sox-9</name>
</gene>
<evidence type="ECO:0000250" key="1">
    <source>
        <dbReference type="UniProtKB" id="P48436"/>
    </source>
</evidence>
<evidence type="ECO:0000255" key="2">
    <source>
        <dbReference type="PROSITE-ProRule" id="PRU00267"/>
    </source>
</evidence>
<evidence type="ECO:0000256" key="3">
    <source>
        <dbReference type="SAM" id="MobiDB-lite"/>
    </source>
</evidence>
<evidence type="ECO:0000269" key="4">
    <source>
    </source>
</evidence>
<evidence type="ECO:0000269" key="5">
    <source>
    </source>
</evidence>
<evidence type="ECO:0000269" key="6">
    <source>
    </source>
</evidence>
<evidence type="ECO:0000269" key="7">
    <source>
    </source>
</evidence>
<evidence type="ECO:0000269" key="8">
    <source>
    </source>
</evidence>
<evidence type="ECO:0000269" key="9">
    <source>
    </source>
</evidence>
<evidence type="ECO:0000269" key="10">
    <source>
    </source>
</evidence>
<evidence type="ECO:0000269" key="11">
    <source>
    </source>
</evidence>
<evidence type="ECO:0000269" key="12">
    <source>
    </source>
</evidence>
<evidence type="ECO:0000269" key="13">
    <source>
    </source>
</evidence>
<evidence type="ECO:0000269" key="14">
    <source>
    </source>
</evidence>
<evidence type="ECO:0000269" key="15">
    <source>
    </source>
</evidence>
<evidence type="ECO:0000269" key="16">
    <source>
    </source>
</evidence>
<evidence type="ECO:0000269" key="17">
    <source>
    </source>
</evidence>
<evidence type="ECO:0000269" key="18">
    <source>
    </source>
</evidence>
<evidence type="ECO:0000269" key="19">
    <source>
    </source>
</evidence>
<evidence type="ECO:0000269" key="20">
    <source>
    </source>
</evidence>
<evidence type="ECO:0000269" key="21">
    <source>
    </source>
</evidence>
<evidence type="ECO:0000269" key="22">
    <source>
    </source>
</evidence>
<evidence type="ECO:0000269" key="23">
    <source>
    </source>
</evidence>
<evidence type="ECO:0000269" key="24">
    <source>
    </source>
</evidence>
<evidence type="ECO:0000269" key="25">
    <source>
    </source>
</evidence>
<evidence type="ECO:0000269" key="26">
    <source>
    </source>
</evidence>
<evidence type="ECO:0000269" key="27">
    <source>
    </source>
</evidence>
<evidence type="ECO:0000269" key="28">
    <source>
    </source>
</evidence>
<evidence type="ECO:0000269" key="29">
    <source>
    </source>
</evidence>
<evidence type="ECO:0000269" key="30">
    <source>
    </source>
</evidence>
<evidence type="ECO:0000269" key="31">
    <source>
    </source>
</evidence>
<evidence type="ECO:0000269" key="32">
    <source>
    </source>
</evidence>
<evidence type="ECO:0000303" key="33">
    <source>
    </source>
</evidence>
<evidence type="ECO:0000303" key="34">
    <source ref="1"/>
</evidence>
<evidence type="ECO:0000305" key="35"/>
<evidence type="ECO:0000305" key="36">
    <source>
    </source>
</evidence>
<evidence type="ECO:0000312" key="37">
    <source>
        <dbReference type="MGI" id="MGI:98371"/>
    </source>
</evidence>
<evidence type="ECO:0007744" key="38">
    <source>
        <dbReference type="PDB" id="4S2Q"/>
    </source>
</evidence>
<evidence type="ECO:0007829" key="39">
    <source>
        <dbReference type="PDB" id="4S2Q"/>
    </source>
</evidence>
<accession>Q04887</accession>
<accession>Q8C7L2</accession>
<accession>Q91ZK2</accession>
<accession>Q99KQ0</accession>
<sequence>MNLLDPFMKMTDEQEKGLSGAPSPTMSEDSAGSPCPSGSGSDTENTRPQENTFPKGEPDLKKESEEDKFPVCIREAVSQVLKGYDWTLVPMPVRVNGSSKNKPHVKRPMNAFMVWAQAARRKLADQYPHLHNAELSKTLGKLWRLLNESEKRPFVEEAERLRVQHKKDHPDYKYQPRRRKSVKNGQAEAEEATEQTHISPNAIFKALQADSPHSSSGMSEVHSPGEHSGQSQGPPTPPTTPKTDVQAGKVDLKREGRPLAEGGRQPPIDFRDVDIGELSSDVISNIETFDVNEFDQYLPPNGHPGVPATHGQVTYTGSYGISSTAPTPATAGHVWMSKQQAPPPPPQQPPQAPQAPQAPPQQQAPPQQPQAPQQQQAHTLTTLSSEPGQSQRTHIKTEQLSPSHYSEQQQHSPQQISYSPFNLPHYSPSYPPITRSQYDYADHQNSGSYYSHAAGQGSGLYSTFTYMNPAQRPMYTPIADTSGVPSIPQTHSPQHWEQPVYTQLTRP</sequence>
<feature type="chain" id="PRO_0000048741" description="Transcription factor SOX-9">
    <location>
        <begin position="1"/>
        <end position="507"/>
    </location>
</feature>
<feature type="DNA-binding region" description="HMG box" evidence="2">
    <location>
        <begin position="105"/>
        <end position="173"/>
    </location>
</feature>
<feature type="region of interest" description="Disordered" evidence="3">
    <location>
        <begin position="1"/>
        <end position="67"/>
    </location>
</feature>
<feature type="region of interest" description="Dimerization (DIM)" evidence="1">
    <location>
        <begin position="63"/>
        <end position="103"/>
    </location>
</feature>
<feature type="region of interest" description="PQA" evidence="1">
    <location>
        <begin position="63"/>
        <end position="103"/>
    </location>
</feature>
<feature type="region of interest" description="Disordered" evidence="3">
    <location>
        <begin position="160"/>
        <end position="250"/>
    </location>
</feature>
<feature type="region of interest" description="Transactivation domain (TAM)" evidence="1">
    <location>
        <begin position="224"/>
        <end position="307"/>
    </location>
</feature>
<feature type="region of interest" description="Disordered" evidence="3">
    <location>
        <begin position="335"/>
        <end position="429"/>
    </location>
</feature>
<feature type="region of interest" description="Transactivation domain (TAC)" evidence="1">
    <location>
        <begin position="392"/>
        <end position="507"/>
    </location>
</feature>
<feature type="region of interest" description="Disordered" evidence="3">
    <location>
        <begin position="477"/>
        <end position="507"/>
    </location>
</feature>
<feature type="short sequence motif" description="9aaTAD 1" evidence="1">
    <location>
        <begin position="275"/>
        <end position="284"/>
    </location>
</feature>
<feature type="short sequence motif" description="9aaTAD 2" evidence="1">
    <location>
        <begin position="290"/>
        <end position="298"/>
    </location>
</feature>
<feature type="short sequence motif" description="9aaTAD 3" evidence="1">
    <location>
        <begin position="458"/>
        <end position="466"/>
    </location>
</feature>
<feature type="compositionally biased region" description="Low complexity" evidence="3">
    <location>
        <begin position="30"/>
        <end position="41"/>
    </location>
</feature>
<feature type="compositionally biased region" description="Polar residues" evidence="3">
    <location>
        <begin position="42"/>
        <end position="52"/>
    </location>
</feature>
<feature type="compositionally biased region" description="Basic and acidic residues" evidence="3">
    <location>
        <begin position="56"/>
        <end position="67"/>
    </location>
</feature>
<feature type="compositionally biased region" description="Basic and acidic residues" evidence="3">
    <location>
        <begin position="160"/>
        <end position="174"/>
    </location>
</feature>
<feature type="compositionally biased region" description="Pro residues" evidence="3">
    <location>
        <begin position="341"/>
        <end position="369"/>
    </location>
</feature>
<feature type="compositionally biased region" description="Polar residues" evidence="3">
    <location>
        <begin position="378"/>
        <end position="420"/>
    </location>
</feature>
<feature type="compositionally biased region" description="Polar residues" evidence="3">
    <location>
        <begin position="483"/>
        <end position="507"/>
    </location>
</feature>
<feature type="modified residue" description="Phosphoserine; by PKA" evidence="5">
    <location>
        <position position="64"/>
    </location>
</feature>
<feature type="modified residue" description="Phosphoserine; by PKA" evidence="5">
    <location>
        <position position="211"/>
    </location>
</feature>
<feature type="cross-link" description="Glycyl lysine isopeptide (Lys-Gly) (interchain with G-Cter in ubiquitin)" evidence="12">
    <location>
        <position position="396"/>
    </location>
</feature>
<feature type="mutagenesis site" description="Abolished phosphorylation by PKA, leading to deacreased ability to activate transcription of target genes; does not affect subcellular localization; when associated with A-211." evidence="5 6">
    <original>S</original>
    <variation>A</variation>
    <location>
        <position position="64"/>
    </location>
</feature>
<feature type="mutagenesis site" description="Abolished phosphorylation by PKA, leading to deacreased ability to activate transcription of target genes; does not affect subcellular localization; when associated with A-64." evidence="5 6">
    <original>S</original>
    <variation>A</variation>
    <location>
        <position position="211"/>
    </location>
</feature>
<feature type="mutagenesis site" description="Increased stability." evidence="12">
    <original>K</original>
    <variation>A</variation>
    <location>
        <position position="396"/>
    </location>
</feature>
<feature type="sequence conflict" description="In Ref. 2; BAC34018." evidence="35" ref="2">
    <original>K</original>
    <variation>R</variation>
    <location>
        <position position="62"/>
    </location>
</feature>
<feature type="helix" evidence="39">
    <location>
        <begin position="111"/>
        <end position="126"/>
    </location>
</feature>
<feature type="helix" evidence="39">
    <location>
        <begin position="132"/>
        <end position="144"/>
    </location>
</feature>
<feature type="helix" evidence="39">
    <location>
        <begin position="148"/>
        <end position="168"/>
    </location>
</feature>
<comment type="function">
    <text evidence="4 5 7 9 10 11 12 14 15 16 17 18 19 21 22 23 24 25 27 28 29 30 32">Transcription factor that plays a key role in chondrocytes differentiation and skeletal development (PubMed:10319868, PubMed:11371614, PubMed:12414734, PubMed:15132997, PubMed:18415932, PubMed:20940257, PubMed:28263186). Specifically binds the 5'-ACAAAG-3' DNA motif present in enhancers and super-enhancers and promotes expression of genes important for chondrogenesis, including cartilage matrix protein-coding genes COL2A1, COL4A2, COL9A1, COL11A2 and ACAN, SOX5 and SOX6 (PubMed:10805756, PubMed:12414734, PubMed:15694126, PubMed:17525254, PubMed:26146088, PubMed:26150426, PubMed:26910618, PubMed:28263186, PubMed:9119111). Also binds to some promoter regions (PubMed:20940257). Plays a central role in successive steps of chondrocyte differentiation (PubMed:11371614, PubMed:12414734, PubMed:22421045). Absolutely required for precartilaginous condensation, the first step in chondrogenesis during which skeletal progenitors differentiate into prechondrocytes (PubMed:11371614, PubMed:12414734). Together with SOX5 and SOX6, required for overt chondrogenesis when condensed prechondrocytes differentiate into early stage chondrocytes, the second step in chondrogenesis (PubMed:11371614, PubMed:12414734, PubMed:15529345). Later, required to direct hypertrophic maturation and block osteoblast differentiation of growth plate chondrocytes: maintains chondrocyte columnar proliferation, delays prehypertrophy and then prevents osteoblastic differentiation of chondrocytes by lowering beta-catenin (CTNNB1) signaling and RUNX2 expression (PubMed:22421045, PubMed:31121357). Also required for chondrocyte hypertrophy, both indirectly, by keeping the lineage fate of chondrocytes, and directly, by remaining present in upper hypertrophic cells and transactivating COL10A1 along with MEF2C (PubMed:21367821, PubMed:22421045). Low lipid levels are the main nutritional determinant for chondrogenic commitment of skeletal progenitor cells: when lipids levels are low, FOXO (FOXO1 and FOXO3) transcription factors promote expression of SOX9, which induces chondrogenic commitment and suppresses fatty acid oxidation (PubMed:32103177). Mechanistically, helps, but is not required, to remove epigenetic signatures of transcriptional repression and deposit active promoter and enhancer marks at chondrocyte-specific genes (PubMed:30021842). Acts in cooperation with the Hedgehog pathway-dependent GLI (GLI1 and GLI3) transcription factors (PubMed:29659575). In addition to cartilage development, also acts as a regulator of proliferation and differentiation in epithelial stem/progenitor cells: involved in the lung epithelium during branching morphogenesis, by balancing proliferation and differentiation and regulating the extracellular matrix (PubMed:24191021). Controls epithelial branching during kidney development (PubMed:21212101).</text>
</comment>
<comment type="subunit">
    <text evidence="1 10 16 22">Homodimer; homodimerization is required for activity (PubMed:26146088). Interacts (via C-terminus) with ZNF219; forming a complex that binds to the COL2A1 promoter and activates COL2A1 expression (PubMed:20940257). Interacts with DDRGK1 (By similarity). Interacts with EP300/p300 (By similarity). Interacts with beta-catenin (CTNNB1); inhibiting CTNNB1 activity by competing with the binding sites of TCF/LEF within CTNNB1 (PubMed:15132997).</text>
</comment>
<comment type="subcellular location">
    <subcellularLocation>
        <location evidence="2 5 12 16 17 24">Nucleus</location>
    </subcellularLocation>
</comment>
<comment type="tissue specificity">
    <text evidence="13 20 32">Expressed in the intestinal epithelium (at protein level) (PubMed:22510880). Expressed in progenitor cells in various organs, including chondroprogenitors, osteoprogenitors and preadipocytes, but is not expressed in most differentiated cell types such as osteoblasts and adipocytes, with the exception of chondrocytes (PubMed:16203988). Highly expressed in developing chondrogenic tissues (PubMed:9119111). Also expressed in some non-chondrogenic tissues such as notochord, otic vesicle and neural tube (PubMed:9119111).</text>
</comment>
<comment type="developmental stage">
    <text evidence="21 31 32">Predominantly expressed in mesenchymal condensations throughout the embryo before and during the deposition of cartilage (PubMed:7704017). Expressed in multipotent skeletogenic cells (PubMed:9119111). Continues to be expressed during chondrocyte lineage progression, except in terminally differentiating growth plate chondrocytes (PubMed:9119111). Also expressed in some non-chondrogenic tissues such as notochord, otic vesicle and neural tube (PubMed:9119111). In the developing lung, expressed at the distal tips of the branching epithelium as branching occurs and is down-regulated starting at embryonic day (E)16.5, at the onset of terminal differentiation of type 1 and type 2 alveolar cells (PubMed:24191021).</text>
</comment>
<comment type="induction">
    <text evidence="30">Upon lipid starvation conditions, expression is activated by FOXO (FOXO1 and FOXO3).</text>
</comment>
<comment type="domain">
    <text evidence="1">The transactivation domains TAM and TAC (for transactivation domain in the middle and at the C-terminus, respectively) are required to contact transcriptional coactivators and basal transcriptional machinery components and thereby induce gene transactivation.</text>
</comment>
<comment type="domain">
    <text evidence="1">The 9aaTAD motif is a transactivation domain present in a large number of yeast and animal transcription factors.</text>
</comment>
<comment type="domain">
    <text evidence="1">The PQA region (for proline, glutamine and alanine-rich) helps stabilize SOX9 and facilitates transactivation. It lacks intrinsic transactivation capability.</text>
</comment>
<comment type="PTM">
    <text evidence="24">Acetylated; acetylation impairs nuclear localization and ability to transactivate expression of target genes (PubMed:26910618). Deacetylated by SIRT1 (PubMed:26910618).</text>
</comment>
<comment type="PTM">
    <text evidence="5 6 26">Phosphorylation at Ser-64 and Ser-211 by PKA increases transcriptional activity and may help delay chondrocyte maturation downstream of PTHLH/PTHrP signaling (PubMed:10805756, PubMed:11120880). Phosphorylation at either Ser-64 or Ser-211 is required for sumoylation, but phosphorylation is not dependent on sumoylation (PubMed:29644115). Phosphorylated on tyrosine residues; tyrosine dephosphorylation by PTPN11/SHP2 blocks SOX9 phosphorylation by PKA and subsequent SUMOylation (PubMed:29644115).</text>
</comment>
<comment type="PTM">
    <text evidence="26">Sumoylated; phosphorylation at either Ser-64 or Ser-211 is required for sumoylation (PubMed:29644115). Sumoylation is induced by BMP signaling pathway (PubMed:29644115).</text>
</comment>
<comment type="PTM">
    <text evidence="36">Ubiquitinated; ubiquitination leads to proteasomal degradation and is negatively regulated by DDRGK1.</text>
</comment>
<comment type="disruption phenotype">
    <text evidence="7 8 9 19 21">Perinatal lethality, with cleft palate, as well as hypoplasia and bending of many skeletal structures derived from cartilage precursors (PubMed:11371614). Heterozygous mice die shortly after birth and display skeletal malformations caused by impaired precartilaginous condensations (PubMed:11371614). In embryonic day 12.5 dpc heterozygotes embryos, skeletal elements are smaller (PubMed:11371614, PubMed:11857796). In 14.5 dpc heterozygous embryos, bending of radius, ulna and tibia cartilages is already prominent (PubMed:11371614). Premature mineralization is observed in many bones, including vertebrae and some craniofacial bones in 18.5 dpc heterozygous embryos (PubMed:11371614). Conditional deletion in undifferentiated mesenchymal cells of limb buds before mesenchymal condensations results in a complete absence of both cartilage and bone, while markers for the different axes of limb development show a normal pattern of expression (PubMed:12414734). Conditional deletion in undifferentiated mesenchymal cells of limb buds after chondrogenic mesenchymal condensations causes a severe generalized chondrodysplasia, in which most prechondrocytes are arrested as condensed mesenchymal cells and do not undergo overt differentiation into chondrocytes (PubMed:12414734). Conditional deletion in differentiated growth plate chondrocytes results in severe dwarfism caused by shortened columnar zones in growth plates, leading to an absence of chondrocyte enlargement (PubMed:22421045). Conditional deletion in epithelial cells leads to severe branching defects in the lung (PubMed:24191021).</text>
</comment>
<proteinExistence type="evidence at protein level"/>
<dbReference type="EMBL" id="AF421878">
    <property type="protein sequence ID" value="AAL16093.1"/>
    <property type="molecule type" value="mRNA"/>
</dbReference>
<dbReference type="EMBL" id="AK030187">
    <property type="protein sequence ID" value="BAC26830.1"/>
    <property type="molecule type" value="mRNA"/>
</dbReference>
<dbReference type="EMBL" id="AK049986">
    <property type="protein sequence ID" value="BAC34018.1"/>
    <property type="molecule type" value="mRNA"/>
</dbReference>
<dbReference type="EMBL" id="BC004064">
    <property type="protein sequence ID" value="AAH04064.1"/>
    <property type="molecule type" value="mRNA"/>
</dbReference>
<dbReference type="EMBL" id="BC023796">
    <property type="protein sequence ID" value="AAH23796.1"/>
    <property type="molecule type" value="mRNA"/>
</dbReference>
<dbReference type="EMBL" id="BC023808">
    <property type="protein sequence ID" value="AAH23808.1"/>
    <property type="molecule type" value="mRNA"/>
</dbReference>
<dbReference type="EMBL" id="BC023953">
    <property type="protein sequence ID" value="AAH23953.1"/>
    <property type="molecule type" value="mRNA"/>
</dbReference>
<dbReference type="EMBL" id="BC024958">
    <property type="protein sequence ID" value="AAH24958.1"/>
    <property type="molecule type" value="mRNA"/>
</dbReference>
<dbReference type="EMBL" id="BC034264">
    <property type="protein sequence ID" value="AAH34264.1"/>
    <property type="molecule type" value="mRNA"/>
</dbReference>
<dbReference type="EMBL" id="Z18958">
    <property type="protein sequence ID" value="CAA79483.1"/>
    <property type="molecule type" value="mRNA"/>
</dbReference>
<dbReference type="CCDS" id="CCDS25595.1"/>
<dbReference type="PIR" id="S30243">
    <property type="entry name" value="S30243"/>
</dbReference>
<dbReference type="PIR" id="S52469">
    <property type="entry name" value="S52469"/>
</dbReference>
<dbReference type="RefSeq" id="NP_035578.3">
    <property type="nucleotide sequence ID" value="NM_011448.4"/>
</dbReference>
<dbReference type="PDB" id="4S2Q">
    <property type="method" value="X-ray"/>
    <property type="resolution" value="2.70 A"/>
    <property type="chains" value="D=103-178"/>
</dbReference>
<dbReference type="PDBsum" id="4S2Q"/>
<dbReference type="SMR" id="Q04887"/>
<dbReference type="BioGRID" id="203413">
    <property type="interactions" value="8"/>
</dbReference>
<dbReference type="FunCoup" id="Q04887">
    <property type="interactions" value="666"/>
</dbReference>
<dbReference type="IntAct" id="Q04887">
    <property type="interactions" value="1"/>
</dbReference>
<dbReference type="STRING" id="10090.ENSMUSP00000000579"/>
<dbReference type="GlyGen" id="Q04887">
    <property type="glycosylation" value="3 sites"/>
</dbReference>
<dbReference type="iPTMnet" id="Q04887"/>
<dbReference type="PhosphoSitePlus" id="Q04887"/>
<dbReference type="PaxDb" id="10090-ENSMUSP00000000579"/>
<dbReference type="PeptideAtlas" id="Q04887"/>
<dbReference type="ProteomicsDB" id="261484"/>
<dbReference type="Pumba" id="Q04887"/>
<dbReference type="Antibodypedia" id="915">
    <property type="antibodies" value="962 antibodies from 42 providers"/>
</dbReference>
<dbReference type="DNASU" id="20682"/>
<dbReference type="Ensembl" id="ENSMUST00000000579.3">
    <property type="protein sequence ID" value="ENSMUSP00000000579.3"/>
    <property type="gene ID" value="ENSMUSG00000000567.6"/>
</dbReference>
<dbReference type="GeneID" id="20682"/>
<dbReference type="KEGG" id="mmu:20682"/>
<dbReference type="UCSC" id="uc007med.2">
    <property type="organism name" value="mouse"/>
</dbReference>
<dbReference type="AGR" id="MGI:98371"/>
<dbReference type="CTD" id="6662"/>
<dbReference type="MGI" id="MGI:98371">
    <property type="gene designation" value="Sox9"/>
</dbReference>
<dbReference type="VEuPathDB" id="HostDB:ENSMUSG00000000567"/>
<dbReference type="eggNOG" id="KOG0527">
    <property type="taxonomic scope" value="Eukaryota"/>
</dbReference>
<dbReference type="GeneTree" id="ENSGT00940000158269"/>
<dbReference type="HOGENOM" id="CLU_031800_0_0_1"/>
<dbReference type="InParanoid" id="Q04887"/>
<dbReference type="OMA" id="QSSNSYY"/>
<dbReference type="OrthoDB" id="6247875at2759"/>
<dbReference type="PhylomeDB" id="Q04887"/>
<dbReference type="TreeFam" id="TF351735"/>
<dbReference type="Reactome" id="R-MMU-3769402">
    <property type="pathway name" value="Deactivation of the beta-catenin transactivating complex"/>
</dbReference>
<dbReference type="Reactome" id="R-MMU-8878166">
    <property type="pathway name" value="Transcriptional regulation by RUNX2"/>
</dbReference>
<dbReference type="BioGRID-ORCS" id="20682">
    <property type="hits" value="3 hits in 79 CRISPR screens"/>
</dbReference>
<dbReference type="ChiTaRS" id="Sox9">
    <property type="organism name" value="mouse"/>
</dbReference>
<dbReference type="PRO" id="PR:Q04887"/>
<dbReference type="Proteomes" id="UP000000589">
    <property type="component" value="Chromosome 11"/>
</dbReference>
<dbReference type="RNAct" id="Q04887">
    <property type="molecule type" value="protein"/>
</dbReference>
<dbReference type="Bgee" id="ENSMUSG00000000567">
    <property type="expression patterns" value="Expressed in digit and 433 other cell types or tissues"/>
</dbReference>
<dbReference type="GO" id="GO:0005654">
    <property type="term" value="C:nucleoplasm"/>
    <property type="evidence" value="ECO:0000304"/>
    <property type="project" value="Reactome"/>
</dbReference>
<dbReference type="GO" id="GO:0005634">
    <property type="term" value="C:nucleus"/>
    <property type="evidence" value="ECO:0000314"/>
    <property type="project" value="UniProtKB"/>
</dbReference>
<dbReference type="GO" id="GO:0032991">
    <property type="term" value="C:protein-containing complex"/>
    <property type="evidence" value="ECO:0000250"/>
    <property type="project" value="UniProtKB"/>
</dbReference>
<dbReference type="GO" id="GO:0005667">
    <property type="term" value="C:transcription regulator complex"/>
    <property type="evidence" value="ECO:0000314"/>
    <property type="project" value="MGI"/>
</dbReference>
<dbReference type="GO" id="GO:0008013">
    <property type="term" value="F:beta-catenin binding"/>
    <property type="evidence" value="ECO:0000314"/>
    <property type="project" value="UniProtKB"/>
</dbReference>
<dbReference type="GO" id="GO:0043425">
    <property type="term" value="F:bHLH transcription factor binding"/>
    <property type="evidence" value="ECO:0007669"/>
    <property type="project" value="Ensembl"/>
</dbReference>
<dbReference type="GO" id="GO:0003682">
    <property type="term" value="F:chromatin binding"/>
    <property type="evidence" value="ECO:0000250"/>
    <property type="project" value="UniProtKB"/>
</dbReference>
<dbReference type="GO" id="GO:0000987">
    <property type="term" value="F:cis-regulatory region sequence-specific DNA binding"/>
    <property type="evidence" value="ECO:0000314"/>
    <property type="project" value="UniProtKB"/>
</dbReference>
<dbReference type="GO" id="GO:0003677">
    <property type="term" value="F:DNA binding"/>
    <property type="evidence" value="ECO:0000314"/>
    <property type="project" value="UniProtKB"/>
</dbReference>
<dbReference type="GO" id="GO:0001228">
    <property type="term" value="F:DNA-binding transcription activator activity, RNA polymerase II-specific"/>
    <property type="evidence" value="ECO:0000314"/>
    <property type="project" value="UniProtKB"/>
</dbReference>
<dbReference type="GO" id="GO:0003700">
    <property type="term" value="F:DNA-binding transcription factor activity"/>
    <property type="evidence" value="ECO:0000314"/>
    <property type="project" value="MGI"/>
</dbReference>
<dbReference type="GO" id="GO:0000981">
    <property type="term" value="F:DNA-binding transcription factor activity, RNA polymerase II-specific"/>
    <property type="evidence" value="ECO:0000314"/>
    <property type="project" value="UniProtKB"/>
</dbReference>
<dbReference type="GO" id="GO:0097157">
    <property type="term" value="F:pre-mRNA intronic binding"/>
    <property type="evidence" value="ECO:0000314"/>
    <property type="project" value="MGI"/>
</dbReference>
<dbReference type="GO" id="GO:0034236">
    <property type="term" value="F:protein kinase A catalytic subunit binding"/>
    <property type="evidence" value="ECO:0007669"/>
    <property type="project" value="Ensembl"/>
</dbReference>
<dbReference type="GO" id="GO:0000978">
    <property type="term" value="F:RNA polymerase II cis-regulatory region sequence-specific DNA binding"/>
    <property type="evidence" value="ECO:0000314"/>
    <property type="project" value="MGI"/>
</dbReference>
<dbReference type="GO" id="GO:0043565">
    <property type="term" value="F:sequence-specific DNA binding"/>
    <property type="evidence" value="ECO:0000314"/>
    <property type="project" value="UniProtKB"/>
</dbReference>
<dbReference type="GO" id="GO:0000976">
    <property type="term" value="F:transcription cis-regulatory region binding"/>
    <property type="evidence" value="ECO:0000314"/>
    <property type="project" value="UniProtKB"/>
</dbReference>
<dbReference type="GO" id="GO:0097065">
    <property type="term" value="P:anterior head development"/>
    <property type="evidence" value="ECO:0000315"/>
    <property type="project" value="MGI"/>
</dbReference>
<dbReference type="GO" id="GO:0003180">
    <property type="term" value="P:aortic valve morphogenesis"/>
    <property type="evidence" value="ECO:0007669"/>
    <property type="project" value="Ensembl"/>
</dbReference>
<dbReference type="GO" id="GO:0006915">
    <property type="term" value="P:apoptotic process"/>
    <property type="evidence" value="ECO:0000315"/>
    <property type="project" value="MGI"/>
</dbReference>
<dbReference type="GO" id="GO:0060018">
    <property type="term" value="P:astrocyte fate commitment"/>
    <property type="evidence" value="ECO:0000316"/>
    <property type="project" value="MGI"/>
</dbReference>
<dbReference type="GO" id="GO:0030282">
    <property type="term" value="P:bone mineralization"/>
    <property type="evidence" value="ECO:0000315"/>
    <property type="project" value="MGI"/>
</dbReference>
<dbReference type="GO" id="GO:0001658">
    <property type="term" value="P:branching involved in ureteric bud morphogenesis"/>
    <property type="evidence" value="ECO:0000270"/>
    <property type="project" value="UniProtKB"/>
</dbReference>
<dbReference type="GO" id="GO:0060532">
    <property type="term" value="P:bronchus cartilage development"/>
    <property type="evidence" value="ECO:0000315"/>
    <property type="project" value="MGI"/>
</dbReference>
<dbReference type="GO" id="GO:0060070">
    <property type="term" value="P:canonical Wnt signaling pathway"/>
    <property type="evidence" value="ECO:0000314"/>
    <property type="project" value="MGI"/>
</dbReference>
<dbReference type="GO" id="GO:0001502">
    <property type="term" value="P:cartilage condensation"/>
    <property type="evidence" value="ECO:0000315"/>
    <property type="project" value="MGI"/>
</dbReference>
<dbReference type="GO" id="GO:0051216">
    <property type="term" value="P:cartilage development"/>
    <property type="evidence" value="ECO:0000314"/>
    <property type="project" value="UniProtKB"/>
</dbReference>
<dbReference type="GO" id="GO:0045165">
    <property type="term" value="P:cell fate commitment"/>
    <property type="evidence" value="ECO:0000316"/>
    <property type="project" value="MGI"/>
</dbReference>
<dbReference type="GO" id="GO:0008283">
    <property type="term" value="P:cell population proliferation"/>
    <property type="evidence" value="ECO:0000315"/>
    <property type="project" value="MGI"/>
</dbReference>
<dbReference type="GO" id="GO:0061323">
    <property type="term" value="P:cell proliferation involved in heart morphogenesis"/>
    <property type="evidence" value="ECO:0000315"/>
    <property type="project" value="MGI"/>
</dbReference>
<dbReference type="GO" id="GO:0098609">
    <property type="term" value="P:cell-cell adhesion"/>
    <property type="evidence" value="ECO:0000315"/>
    <property type="project" value="MGI"/>
</dbReference>
<dbReference type="GO" id="GO:0071773">
    <property type="term" value="P:cellular response to BMP stimulus"/>
    <property type="evidence" value="ECO:0000250"/>
    <property type="project" value="UniProtKB"/>
</dbReference>
<dbReference type="GO" id="GO:0071364">
    <property type="term" value="P:cellular response to epidermal growth factor stimulus"/>
    <property type="evidence" value="ECO:0000314"/>
    <property type="project" value="UniProtKB"/>
</dbReference>
<dbReference type="GO" id="GO:0071504">
    <property type="term" value="P:cellular response to heparin"/>
    <property type="evidence" value="ECO:0000314"/>
    <property type="project" value="UniProtKB"/>
</dbReference>
<dbReference type="GO" id="GO:0071347">
    <property type="term" value="P:cellular response to interleukin-1"/>
    <property type="evidence" value="ECO:0007669"/>
    <property type="project" value="Ensembl"/>
</dbReference>
<dbReference type="GO" id="GO:0071260">
    <property type="term" value="P:cellular response to mechanical stimulus"/>
    <property type="evidence" value="ECO:0000314"/>
    <property type="project" value="UniProtKB"/>
</dbReference>
<dbReference type="GO" id="GO:0071300">
    <property type="term" value="P:cellular response to retinoic acid"/>
    <property type="evidence" value="ECO:0000314"/>
    <property type="project" value="MGI"/>
</dbReference>
<dbReference type="GO" id="GO:0071560">
    <property type="term" value="P:cellular response to transforming growth factor beta stimulus"/>
    <property type="evidence" value="ECO:0000270"/>
    <property type="project" value="UniProtKB"/>
</dbReference>
<dbReference type="GO" id="GO:0007417">
    <property type="term" value="P:central nervous system development"/>
    <property type="evidence" value="ECO:0000270"/>
    <property type="project" value="UniProtKB"/>
</dbReference>
<dbReference type="GO" id="GO:0002063">
    <property type="term" value="P:chondrocyte development"/>
    <property type="evidence" value="ECO:0000315"/>
    <property type="project" value="MGI"/>
</dbReference>
<dbReference type="GO" id="GO:0002062">
    <property type="term" value="P:chondrocyte differentiation"/>
    <property type="evidence" value="ECO:0000314"/>
    <property type="project" value="UniProtKB"/>
</dbReference>
<dbReference type="GO" id="GO:0003413">
    <property type="term" value="P:chondrocyte differentiation involved in endochondral bone morphogenesis"/>
    <property type="evidence" value="ECO:0000250"/>
    <property type="project" value="UniProtKB"/>
</dbReference>
<dbReference type="GO" id="GO:0003415">
    <property type="term" value="P:chondrocyte hypertrophy"/>
    <property type="evidence" value="ECO:0000315"/>
    <property type="project" value="UniProtKB"/>
</dbReference>
<dbReference type="GO" id="GO:0006338">
    <property type="term" value="P:chromatin remodeling"/>
    <property type="evidence" value="ECO:0000250"/>
    <property type="project" value="UniProtKB"/>
</dbReference>
<dbReference type="GO" id="GO:0090103">
    <property type="term" value="P:cochlea morphogenesis"/>
    <property type="evidence" value="ECO:0000315"/>
    <property type="project" value="MGI"/>
</dbReference>
<dbReference type="GO" id="GO:0007010">
    <property type="term" value="P:cytoskeleton organization"/>
    <property type="evidence" value="ECO:0000315"/>
    <property type="project" value="MGI"/>
</dbReference>
<dbReference type="GO" id="GO:0003203">
    <property type="term" value="P:endocardial cushion morphogenesis"/>
    <property type="evidence" value="ECO:0000315"/>
    <property type="project" value="MGI"/>
</dbReference>
<dbReference type="GO" id="GO:0060350">
    <property type="term" value="P:endochondral bone morphogenesis"/>
    <property type="evidence" value="ECO:0000315"/>
    <property type="project" value="MGI"/>
</dbReference>
<dbReference type="GO" id="GO:0031018">
    <property type="term" value="P:endocrine pancreas development"/>
    <property type="evidence" value="ECO:0000315"/>
    <property type="project" value="MGI"/>
</dbReference>
<dbReference type="GO" id="GO:0007173">
    <property type="term" value="P:epidermal growth factor receptor signaling pathway"/>
    <property type="evidence" value="ECO:0000314"/>
    <property type="project" value="UniProtKB"/>
</dbReference>
<dbReference type="GO" id="GO:0050673">
    <property type="term" value="P:epithelial cell proliferation"/>
    <property type="evidence" value="ECO:0000315"/>
    <property type="project" value="MGI"/>
</dbReference>
<dbReference type="GO" id="GO:0060517">
    <property type="term" value="P:epithelial cell proliferation involved in prostatic bud elongation"/>
    <property type="evidence" value="ECO:0000315"/>
    <property type="project" value="MGI"/>
</dbReference>
<dbReference type="GO" id="GO:0001837">
    <property type="term" value="P:epithelial to mesenchymal transition"/>
    <property type="evidence" value="ECO:0000315"/>
    <property type="project" value="MGI"/>
</dbReference>
<dbReference type="GO" id="GO:0060441">
    <property type="term" value="P:epithelial tube branching involved in lung morphogenesis"/>
    <property type="evidence" value="ECO:0000315"/>
    <property type="project" value="MGI"/>
</dbReference>
<dbReference type="GO" id="GO:0070371">
    <property type="term" value="P:ERK1 and ERK2 cascade"/>
    <property type="evidence" value="ECO:0000314"/>
    <property type="project" value="UniProtKB"/>
</dbReference>
<dbReference type="GO" id="GO:0085029">
    <property type="term" value="P:extracellular matrix assembly"/>
    <property type="evidence" value="ECO:0000315"/>
    <property type="project" value="MGI"/>
</dbReference>
<dbReference type="GO" id="GO:0030198">
    <property type="term" value="P:extracellular matrix organization"/>
    <property type="evidence" value="ECO:0000315"/>
    <property type="project" value="MGI"/>
</dbReference>
<dbReference type="GO" id="GO:0010467">
    <property type="term" value="P:gene expression"/>
    <property type="evidence" value="ECO:0000315"/>
    <property type="project" value="MGI"/>
</dbReference>
<dbReference type="GO" id="GO:0002067">
    <property type="term" value="P:glandular epithelial cell differentiation"/>
    <property type="evidence" value="ECO:0000315"/>
    <property type="project" value="MGI"/>
</dbReference>
<dbReference type="GO" id="GO:0021780">
    <property type="term" value="P:glial cell fate specification"/>
    <property type="evidence" value="ECO:0000315"/>
    <property type="project" value="MGI"/>
</dbReference>
<dbReference type="GO" id="GO:0003430">
    <property type="term" value="P:growth plate cartilage chondrocyte growth"/>
    <property type="evidence" value="ECO:0000315"/>
    <property type="project" value="UniProtKB"/>
</dbReference>
<dbReference type="GO" id="GO:0001942">
    <property type="term" value="P:hair follicle development"/>
    <property type="evidence" value="ECO:0000315"/>
    <property type="project" value="MGI"/>
</dbReference>
<dbReference type="GO" id="GO:0070384">
    <property type="term" value="P:Harderian gland development"/>
    <property type="evidence" value="ECO:0000315"/>
    <property type="project" value="MGI"/>
</dbReference>
<dbReference type="GO" id="GO:0007507">
    <property type="term" value="P:heart development"/>
    <property type="evidence" value="ECO:0000315"/>
    <property type="project" value="MGI"/>
</dbReference>
<dbReference type="GO" id="GO:0003170">
    <property type="term" value="P:heart valve development"/>
    <property type="evidence" value="ECO:0000315"/>
    <property type="project" value="UniProtKB"/>
</dbReference>
<dbReference type="GO" id="GO:0003188">
    <property type="term" value="P:heart valve formation"/>
    <property type="evidence" value="ECO:0000315"/>
    <property type="project" value="MGI"/>
</dbReference>
<dbReference type="GO" id="GO:0003179">
    <property type="term" value="P:heart valve morphogenesis"/>
    <property type="evidence" value="ECO:0000315"/>
    <property type="project" value="MGI"/>
</dbReference>
<dbReference type="GO" id="GO:0048873">
    <property type="term" value="P:homeostasis of number of cells within a tissue"/>
    <property type="evidence" value="ECO:0000315"/>
    <property type="project" value="MGI"/>
</dbReference>
<dbReference type="GO" id="GO:0060575">
    <property type="term" value="P:intestinal epithelial cell differentiation"/>
    <property type="evidence" value="ECO:0000315"/>
    <property type="project" value="MGI"/>
</dbReference>
<dbReference type="GO" id="GO:0060729">
    <property type="term" value="P:intestinal epithelial structure maintenance"/>
    <property type="evidence" value="ECO:0000315"/>
    <property type="project" value="MGI"/>
</dbReference>
<dbReference type="GO" id="GO:0035622">
    <property type="term" value="P:intrahepatic bile duct development"/>
    <property type="evidence" value="ECO:0000315"/>
    <property type="project" value="MGI"/>
</dbReference>
<dbReference type="GO" id="GO:0032808">
    <property type="term" value="P:lacrimal gland development"/>
    <property type="evidence" value="ECO:0000315"/>
    <property type="project" value="MGI"/>
</dbReference>
<dbReference type="GO" id="GO:0060174">
    <property type="term" value="P:limb bud formation"/>
    <property type="evidence" value="ECO:0000270"/>
    <property type="project" value="UniProtKB"/>
</dbReference>
<dbReference type="GO" id="GO:0060487">
    <property type="term" value="P:lung epithelial cell differentiation"/>
    <property type="evidence" value="ECO:0000315"/>
    <property type="project" value="MGI"/>
</dbReference>
<dbReference type="GO" id="GO:0061145">
    <property type="term" value="P:lung smooth muscle development"/>
    <property type="evidence" value="ECO:0000315"/>
    <property type="project" value="MGI"/>
</dbReference>
<dbReference type="GO" id="GO:0019100">
    <property type="term" value="P:male germ-line sex determination"/>
    <property type="evidence" value="ECO:0000315"/>
    <property type="project" value="MGI"/>
</dbReference>
<dbReference type="GO" id="GO:0008584">
    <property type="term" value="P:male gonad development"/>
    <property type="evidence" value="ECO:0000315"/>
    <property type="project" value="MGI"/>
</dbReference>
<dbReference type="GO" id="GO:0030238">
    <property type="term" value="P:male sex determination"/>
    <property type="evidence" value="ECO:0000316"/>
    <property type="project" value="MGI"/>
</dbReference>
<dbReference type="GO" id="GO:0030879">
    <property type="term" value="P:mammary gland development"/>
    <property type="evidence" value="ECO:0000270"/>
    <property type="project" value="UniProtKB"/>
</dbReference>
<dbReference type="GO" id="GO:0097152">
    <property type="term" value="P:mesenchymal cell apoptotic process"/>
    <property type="evidence" value="ECO:0000315"/>
    <property type="project" value="MGI"/>
</dbReference>
<dbReference type="GO" id="GO:0010463">
    <property type="term" value="P:mesenchymal cell proliferation"/>
    <property type="evidence" value="ECO:0000315"/>
    <property type="project" value="MGI"/>
</dbReference>
<dbReference type="GO" id="GO:0072289">
    <property type="term" value="P:metanephric nephron tubule formation"/>
    <property type="evidence" value="ECO:0000316"/>
    <property type="project" value="MGI"/>
</dbReference>
<dbReference type="GO" id="GO:0072170">
    <property type="term" value="P:metanephric tubule development"/>
    <property type="evidence" value="ECO:0000270"/>
    <property type="project" value="UniProtKB"/>
</dbReference>
<dbReference type="GO" id="GO:0061138">
    <property type="term" value="P:morphogenesis of a branching epithelium"/>
    <property type="evidence" value="ECO:0000315"/>
    <property type="project" value="MGI"/>
</dbReference>
<dbReference type="GO" id="GO:0043066">
    <property type="term" value="P:negative regulation of apoptotic process"/>
    <property type="evidence" value="ECO:0000315"/>
    <property type="project" value="MGI"/>
</dbReference>
<dbReference type="GO" id="GO:1904864">
    <property type="term" value="P:negative regulation of beta-catenin-TCF complex assembly"/>
    <property type="evidence" value="ECO:0000315"/>
    <property type="project" value="UniProtKB"/>
</dbReference>
<dbReference type="GO" id="GO:0070168">
    <property type="term" value="P:negative regulation of biomineral tissue development"/>
    <property type="evidence" value="ECO:0000315"/>
    <property type="project" value="UniProtKB"/>
</dbReference>
<dbReference type="GO" id="GO:0030502">
    <property type="term" value="P:negative regulation of bone mineralization"/>
    <property type="evidence" value="ECO:0000315"/>
    <property type="project" value="MGI"/>
</dbReference>
<dbReference type="GO" id="GO:0090090">
    <property type="term" value="P:negative regulation of canonical Wnt signaling pathway"/>
    <property type="evidence" value="ECO:0000314"/>
    <property type="project" value="UniProtKB"/>
</dbReference>
<dbReference type="GO" id="GO:0032331">
    <property type="term" value="P:negative regulation of chondrocyte differentiation"/>
    <property type="evidence" value="ECO:0000315"/>
    <property type="project" value="MGI"/>
</dbReference>
<dbReference type="GO" id="GO:0045892">
    <property type="term" value="P:negative regulation of DNA-templated transcription"/>
    <property type="evidence" value="ECO:0000314"/>
    <property type="project" value="MGI"/>
</dbReference>
<dbReference type="GO" id="GO:0030857">
    <property type="term" value="P:negative regulation of epithelial cell differentiation"/>
    <property type="evidence" value="ECO:0000315"/>
    <property type="project" value="MGI"/>
</dbReference>
<dbReference type="GO" id="GO:0050680">
    <property type="term" value="P:negative regulation of epithelial cell proliferation"/>
    <property type="evidence" value="ECO:0000315"/>
    <property type="project" value="MGI"/>
</dbReference>
<dbReference type="GO" id="GO:0046322">
    <property type="term" value="P:negative regulation of fatty acid oxidation"/>
    <property type="evidence" value="ECO:0000314"/>
    <property type="project" value="UniProtKB"/>
</dbReference>
<dbReference type="GO" id="GO:0010629">
    <property type="term" value="P:negative regulation of gene expression"/>
    <property type="evidence" value="ECO:0000315"/>
    <property type="project" value="MGI"/>
</dbReference>
<dbReference type="GO" id="GO:0002683">
    <property type="term" value="P:negative regulation of immune system process"/>
    <property type="evidence" value="ECO:0000315"/>
    <property type="project" value="UniProtKB"/>
</dbReference>
<dbReference type="GO" id="GO:2001054">
    <property type="term" value="P:negative regulation of mesenchymal cell apoptotic process"/>
    <property type="evidence" value="ECO:0000315"/>
    <property type="project" value="MGI"/>
</dbReference>
<dbReference type="GO" id="GO:1902894">
    <property type="term" value="P:negative regulation of miRNA transcription"/>
    <property type="evidence" value="ECO:0007669"/>
    <property type="project" value="Ensembl"/>
</dbReference>
<dbReference type="GO" id="GO:0045662">
    <property type="term" value="P:negative regulation of myoblast differentiation"/>
    <property type="evidence" value="ECO:0000314"/>
    <property type="project" value="MGI"/>
</dbReference>
<dbReference type="GO" id="GO:0030279">
    <property type="term" value="P:negative regulation of ossification"/>
    <property type="evidence" value="ECO:0000315"/>
    <property type="project" value="UniProtKB"/>
</dbReference>
<dbReference type="GO" id="GO:0045668">
    <property type="term" value="P:negative regulation of osteoblast differentiation"/>
    <property type="evidence" value="ECO:0000314"/>
    <property type="project" value="UniProtKB"/>
</dbReference>
<dbReference type="GO" id="GO:0046533">
    <property type="term" value="P:negative regulation of photoreceptor cell differentiation"/>
    <property type="evidence" value="ECO:0000316"/>
    <property type="project" value="MGI"/>
</dbReference>
<dbReference type="GO" id="GO:0000122">
    <property type="term" value="P:negative regulation of transcription by RNA polymerase II"/>
    <property type="evidence" value="ECO:0000266"/>
    <property type="project" value="MGI"/>
</dbReference>
<dbReference type="GO" id="GO:0014032">
    <property type="term" value="P:neural crest cell development"/>
    <property type="evidence" value="ECO:0000315"/>
    <property type="project" value="MGI"/>
</dbReference>
<dbReference type="GO" id="GO:0014036">
    <property type="term" value="P:neural crest cell fate specification"/>
    <property type="evidence" value="ECO:0000250"/>
    <property type="project" value="UniProtKB"/>
</dbReference>
<dbReference type="GO" id="GO:0048665">
    <property type="term" value="P:neuron fate specification"/>
    <property type="evidence" value="ECO:0000315"/>
    <property type="project" value="MGI"/>
</dbReference>
<dbReference type="GO" id="GO:0007219">
    <property type="term" value="P:Notch signaling pathway"/>
    <property type="evidence" value="ECO:0000314"/>
    <property type="project" value="MGI"/>
</dbReference>
<dbReference type="GO" id="GO:0030903">
    <property type="term" value="P:notochord development"/>
    <property type="evidence" value="ECO:0000270"/>
    <property type="project" value="UniProtKB"/>
</dbReference>
<dbReference type="GO" id="GO:0006334">
    <property type="term" value="P:nucleosome assembly"/>
    <property type="evidence" value="ECO:0000250"/>
    <property type="project" value="UniProtKB"/>
</dbReference>
<dbReference type="GO" id="GO:0048709">
    <property type="term" value="P:oligodendrocyte differentiation"/>
    <property type="evidence" value="ECO:0000315"/>
    <property type="project" value="MGI"/>
</dbReference>
<dbReference type="GO" id="GO:0001503">
    <property type="term" value="P:ossification"/>
    <property type="evidence" value="ECO:0000270"/>
    <property type="project" value="UniProtKB"/>
</dbReference>
<dbReference type="GO" id="GO:0071599">
    <property type="term" value="P:otic vesicle development"/>
    <property type="evidence" value="ECO:0000270"/>
    <property type="project" value="UniProtKB"/>
</dbReference>
<dbReference type="GO" id="GO:0030916">
    <property type="term" value="P:otic vesicle formation"/>
    <property type="evidence" value="ECO:0000315"/>
    <property type="project" value="MGI"/>
</dbReference>
<dbReference type="GO" id="GO:0090190">
    <property type="term" value="P:positive regulation of branching involved in ureteric bud morphogenesis"/>
    <property type="evidence" value="ECO:0000315"/>
    <property type="project" value="UniProtKB"/>
</dbReference>
<dbReference type="GO" id="GO:0061036">
    <property type="term" value="P:positive regulation of cartilage development"/>
    <property type="evidence" value="ECO:0000314"/>
    <property type="project" value="MGI"/>
</dbReference>
<dbReference type="GO" id="GO:0008284">
    <property type="term" value="P:positive regulation of cell population proliferation"/>
    <property type="evidence" value="ECO:0000315"/>
    <property type="project" value="MGI"/>
</dbReference>
<dbReference type="GO" id="GO:2000138">
    <property type="term" value="P:positive regulation of cell proliferation involved in heart morphogenesis"/>
    <property type="evidence" value="ECO:0000315"/>
    <property type="project" value="MGI"/>
</dbReference>
<dbReference type="GO" id="GO:0032332">
    <property type="term" value="P:positive regulation of chondrocyte differentiation"/>
    <property type="evidence" value="ECO:0000314"/>
    <property type="project" value="UniProtKB"/>
</dbReference>
<dbReference type="GO" id="GO:1902732">
    <property type="term" value="P:positive regulation of chondrocyte proliferation"/>
    <property type="evidence" value="ECO:0007669"/>
    <property type="project" value="Ensembl"/>
</dbReference>
<dbReference type="GO" id="GO:0045893">
    <property type="term" value="P:positive regulation of DNA-templated transcription"/>
    <property type="evidence" value="ECO:0000314"/>
    <property type="project" value="UniProtKB"/>
</dbReference>
<dbReference type="GO" id="GO:0030858">
    <property type="term" value="P:positive regulation of epithelial cell differentiation"/>
    <property type="evidence" value="ECO:0000315"/>
    <property type="project" value="MGI"/>
</dbReference>
<dbReference type="GO" id="GO:0010634">
    <property type="term" value="P:positive regulation of epithelial cell migration"/>
    <property type="evidence" value="ECO:0000315"/>
    <property type="project" value="MGI"/>
</dbReference>
<dbReference type="GO" id="GO:0050679">
    <property type="term" value="P:positive regulation of epithelial cell proliferation"/>
    <property type="evidence" value="ECO:0000315"/>
    <property type="project" value="UniProtKB"/>
</dbReference>
<dbReference type="GO" id="GO:1901203">
    <property type="term" value="P:positive regulation of extracellular matrix assembly"/>
    <property type="evidence" value="ECO:0000315"/>
    <property type="project" value="MGI"/>
</dbReference>
<dbReference type="GO" id="GO:0010628">
    <property type="term" value="P:positive regulation of gene expression"/>
    <property type="evidence" value="ECO:0000316"/>
    <property type="project" value="MGI"/>
</dbReference>
<dbReference type="GO" id="GO:0090184">
    <property type="term" value="P:positive regulation of kidney development"/>
    <property type="evidence" value="ECO:0000316"/>
    <property type="project" value="UniProtKB"/>
</dbReference>
<dbReference type="GO" id="GO:2000020">
    <property type="term" value="P:positive regulation of male gonad development"/>
    <property type="evidence" value="ECO:0000250"/>
    <property type="project" value="UniProtKB"/>
</dbReference>
<dbReference type="GO" id="GO:0002053">
    <property type="term" value="P:positive regulation of mesenchymal cell proliferation"/>
    <property type="evidence" value="ECO:0000315"/>
    <property type="project" value="MGI"/>
</dbReference>
<dbReference type="GO" id="GO:2000741">
    <property type="term" value="P:positive regulation of mesenchymal stem cell differentiation"/>
    <property type="evidence" value="ECO:0000250"/>
    <property type="project" value="UniProtKB"/>
</dbReference>
<dbReference type="GO" id="GO:0045732">
    <property type="term" value="P:positive regulation of protein catabolic process"/>
    <property type="evidence" value="ECO:0000314"/>
    <property type="project" value="MGI"/>
</dbReference>
<dbReference type="GO" id="GO:2000648">
    <property type="term" value="P:positive regulation of stem cell proliferation"/>
    <property type="evidence" value="ECO:0000315"/>
    <property type="project" value="MGI"/>
</dbReference>
<dbReference type="GO" id="GO:0045944">
    <property type="term" value="P:positive regulation of transcription by RNA polymerase II"/>
    <property type="evidence" value="ECO:0000314"/>
    <property type="project" value="UniProtKB"/>
</dbReference>
<dbReference type="GO" id="GO:0030850">
    <property type="term" value="P:prostate gland development"/>
    <property type="evidence" value="ECO:0000270"/>
    <property type="project" value="UniProtKB"/>
</dbReference>
<dbReference type="GO" id="GO:0060512">
    <property type="term" value="P:prostate gland morphogenesis"/>
    <property type="evidence" value="ECO:0000315"/>
    <property type="project" value="MGI"/>
</dbReference>
<dbReference type="GO" id="GO:0034504">
    <property type="term" value="P:protein localization to nucleus"/>
    <property type="evidence" value="ECO:0000314"/>
    <property type="project" value="MGI"/>
</dbReference>
<dbReference type="GO" id="GO:0065003">
    <property type="term" value="P:protein-containing complex assembly"/>
    <property type="evidence" value="ECO:0000250"/>
    <property type="project" value="UniProtKB"/>
</dbReference>
<dbReference type="GO" id="GO:0061046">
    <property type="term" value="P:regulation of branching involved in lung morphogenesis"/>
    <property type="evidence" value="ECO:0000315"/>
    <property type="project" value="MGI"/>
</dbReference>
<dbReference type="GO" id="GO:0030155">
    <property type="term" value="P:regulation of cell adhesion"/>
    <property type="evidence" value="ECO:0000315"/>
    <property type="project" value="MGI"/>
</dbReference>
<dbReference type="GO" id="GO:0010564">
    <property type="term" value="P:regulation of cell cycle process"/>
    <property type="evidence" value="ECO:0000250"/>
    <property type="project" value="UniProtKB"/>
</dbReference>
<dbReference type="GO" id="GO:0045595">
    <property type="term" value="P:regulation of cell differentiation"/>
    <property type="evidence" value="ECO:0000315"/>
    <property type="project" value="MGI"/>
</dbReference>
<dbReference type="GO" id="GO:0042127">
    <property type="term" value="P:regulation of cell population proliferation"/>
    <property type="evidence" value="ECO:0000315"/>
    <property type="project" value="MGI"/>
</dbReference>
<dbReference type="GO" id="GO:0060784">
    <property type="term" value="P:regulation of cell proliferation involved in tissue homeostasis"/>
    <property type="evidence" value="ECO:0000315"/>
    <property type="project" value="MGI"/>
</dbReference>
<dbReference type="GO" id="GO:0006355">
    <property type="term" value="P:regulation of DNA-templated transcription"/>
    <property type="evidence" value="ECO:0000304"/>
    <property type="project" value="MGI"/>
</dbReference>
<dbReference type="GO" id="GO:2000794">
    <property type="term" value="P:regulation of epithelial cell proliferation involved in lung morphogenesis"/>
    <property type="evidence" value="ECO:0000315"/>
    <property type="project" value="MGI"/>
</dbReference>
<dbReference type="GO" id="GO:0010468">
    <property type="term" value="P:regulation of gene expression"/>
    <property type="evidence" value="ECO:0000314"/>
    <property type="project" value="MGI"/>
</dbReference>
<dbReference type="GO" id="GO:0006357">
    <property type="term" value="P:regulation of transcription by RNA polymerase II"/>
    <property type="evidence" value="ECO:0000314"/>
    <property type="project" value="MGI"/>
</dbReference>
<dbReference type="GO" id="GO:0072034">
    <property type="term" value="P:renal vesicle induction"/>
    <property type="evidence" value="ECO:0000315"/>
    <property type="project" value="UniProtKB"/>
</dbReference>
<dbReference type="GO" id="GO:0070542">
    <property type="term" value="P:response to fatty acid"/>
    <property type="evidence" value="ECO:0000314"/>
    <property type="project" value="UniProtKB"/>
</dbReference>
<dbReference type="GO" id="GO:0060041">
    <property type="term" value="P:retina development in camera-type eye"/>
    <property type="evidence" value="ECO:0000316"/>
    <property type="project" value="MGI"/>
</dbReference>
<dbReference type="GO" id="GO:0060221">
    <property type="term" value="P:retinal rod cell differentiation"/>
    <property type="evidence" value="ECO:0000316"/>
    <property type="project" value="MGI"/>
</dbReference>
<dbReference type="GO" id="GO:0060009">
    <property type="term" value="P:Sertoli cell development"/>
    <property type="evidence" value="ECO:0000316"/>
    <property type="project" value="MGI"/>
</dbReference>
<dbReference type="GO" id="GO:0060008">
    <property type="term" value="P:Sertoli cell differentiation"/>
    <property type="evidence" value="ECO:0000315"/>
    <property type="project" value="MGI"/>
</dbReference>
<dbReference type="GO" id="GO:0007165">
    <property type="term" value="P:signal transduction"/>
    <property type="evidence" value="ECO:0000315"/>
    <property type="project" value="UniProtKB"/>
</dbReference>
<dbReference type="GO" id="GO:0001501">
    <property type="term" value="P:skeletal system development"/>
    <property type="evidence" value="ECO:0000250"/>
    <property type="project" value="UniProtKB"/>
</dbReference>
<dbReference type="GO" id="GO:0035019">
    <property type="term" value="P:somatic stem cell population maintenance"/>
    <property type="evidence" value="ECO:0000315"/>
    <property type="project" value="MGI"/>
</dbReference>
<dbReference type="GO" id="GO:0007283">
    <property type="term" value="P:spermatogenesis"/>
    <property type="evidence" value="ECO:0000316"/>
    <property type="project" value="MGI"/>
</dbReference>
<dbReference type="GO" id="GO:0072089">
    <property type="term" value="P:stem cell proliferation"/>
    <property type="evidence" value="ECO:0000315"/>
    <property type="project" value="MGI"/>
</dbReference>
<dbReference type="GO" id="GO:0001894">
    <property type="term" value="P:tissue homeostasis"/>
    <property type="evidence" value="ECO:0000315"/>
    <property type="project" value="UniProtKB"/>
</dbReference>
<dbReference type="GO" id="GO:0060534">
    <property type="term" value="P:trachea cartilage development"/>
    <property type="evidence" value="ECO:0000315"/>
    <property type="project" value="MGI"/>
</dbReference>
<dbReference type="GO" id="GO:0006366">
    <property type="term" value="P:transcription by RNA polymerase II"/>
    <property type="evidence" value="ECO:0000314"/>
    <property type="project" value="MGI"/>
</dbReference>
<dbReference type="GO" id="GO:0060509">
    <property type="term" value="P:type I pneumocyte differentiation"/>
    <property type="evidence" value="ECO:0000315"/>
    <property type="project" value="MGI"/>
</dbReference>
<dbReference type="GO" id="GO:0072189">
    <property type="term" value="P:ureter development"/>
    <property type="evidence" value="ECO:0000316"/>
    <property type="project" value="MGI"/>
</dbReference>
<dbReference type="GO" id="GO:0072197">
    <property type="term" value="P:ureter morphogenesis"/>
    <property type="evidence" value="ECO:0000316"/>
    <property type="project" value="MGI"/>
</dbReference>
<dbReference type="GO" id="GO:0072193">
    <property type="term" value="P:ureter smooth muscle cell differentiation"/>
    <property type="evidence" value="ECO:0000315"/>
    <property type="project" value="MGI"/>
</dbReference>
<dbReference type="GO" id="GO:0072190">
    <property type="term" value="P:ureter urothelium development"/>
    <property type="evidence" value="ECO:0000270"/>
    <property type="project" value="UniProtKB"/>
</dbReference>
<dbReference type="CDD" id="cd22031">
    <property type="entry name" value="HMG-box_SoxE"/>
    <property type="match status" value="1"/>
</dbReference>
<dbReference type="FunFam" id="1.10.30.10:FF:000004">
    <property type="entry name" value="Transcription factor SOX-10"/>
    <property type="match status" value="1"/>
</dbReference>
<dbReference type="Gene3D" id="1.10.30.10">
    <property type="entry name" value="High mobility group box domain"/>
    <property type="match status" value="1"/>
</dbReference>
<dbReference type="InterPro" id="IPR009071">
    <property type="entry name" value="HMG_box_dom"/>
</dbReference>
<dbReference type="InterPro" id="IPR036910">
    <property type="entry name" value="HMG_box_dom_sf"/>
</dbReference>
<dbReference type="InterPro" id="IPR022151">
    <property type="entry name" value="Sox_N"/>
</dbReference>
<dbReference type="InterPro" id="IPR050917">
    <property type="entry name" value="SOX_TF"/>
</dbReference>
<dbReference type="PANTHER" id="PTHR45803">
    <property type="entry name" value="SOX100B"/>
    <property type="match status" value="1"/>
</dbReference>
<dbReference type="PANTHER" id="PTHR45803:SF1">
    <property type="entry name" value="TRANSCRIPTION FACTOR SOX-9"/>
    <property type="match status" value="1"/>
</dbReference>
<dbReference type="Pfam" id="PF00505">
    <property type="entry name" value="HMG_box"/>
    <property type="match status" value="1"/>
</dbReference>
<dbReference type="Pfam" id="PF12444">
    <property type="entry name" value="Sox_N"/>
    <property type="match status" value="1"/>
</dbReference>
<dbReference type="SMART" id="SM00398">
    <property type="entry name" value="HMG"/>
    <property type="match status" value="1"/>
</dbReference>
<dbReference type="SUPFAM" id="SSF47095">
    <property type="entry name" value="HMG-box"/>
    <property type="match status" value="1"/>
</dbReference>
<dbReference type="PROSITE" id="PS50118">
    <property type="entry name" value="HMG_BOX_2"/>
    <property type="match status" value="1"/>
</dbReference>